<dbReference type="EMBL" id="BA000018">
    <property type="protein sequence ID" value="BAB43265.1"/>
    <property type="molecule type" value="Genomic_DNA"/>
</dbReference>
<dbReference type="PIR" id="H90012">
    <property type="entry name" value="H90012"/>
</dbReference>
<dbReference type="RefSeq" id="WP_001251935.1">
    <property type="nucleotide sequence ID" value="NC_002745.2"/>
</dbReference>
<dbReference type="SMR" id="Q99S93"/>
<dbReference type="EnsemblBacteria" id="BAB43265">
    <property type="protein sequence ID" value="BAB43265"/>
    <property type="gene ID" value="BAB43265"/>
</dbReference>
<dbReference type="KEGG" id="sau:SAS074"/>
<dbReference type="HOGENOM" id="CLU_174851_0_0_9"/>
<dbReference type="InterPro" id="IPR055365">
    <property type="entry name" value="PH_SunI-like"/>
</dbReference>
<dbReference type="Pfam" id="PF23491">
    <property type="entry name" value="bPH_8"/>
    <property type="match status" value="1"/>
</dbReference>
<comment type="similarity">
    <text evidence="1">Belongs to the UPF0457 family.</text>
</comment>
<reference key="1">
    <citation type="journal article" date="2001" name="Lancet">
        <title>Whole genome sequencing of meticillin-resistant Staphylococcus aureus.</title>
        <authorList>
            <person name="Kuroda M."/>
            <person name="Ohta T."/>
            <person name="Uchiyama I."/>
            <person name="Baba T."/>
            <person name="Yuzawa H."/>
            <person name="Kobayashi I."/>
            <person name="Cui L."/>
            <person name="Oguchi A."/>
            <person name="Aoki K."/>
            <person name="Nagai Y."/>
            <person name="Lian J.-Q."/>
            <person name="Ito T."/>
            <person name="Kanamori M."/>
            <person name="Matsumaru H."/>
            <person name="Maruyama A."/>
            <person name="Murakami H."/>
            <person name="Hosoyama A."/>
            <person name="Mizutani-Ui Y."/>
            <person name="Takahashi N.K."/>
            <person name="Sawano T."/>
            <person name="Inoue R."/>
            <person name="Kaito C."/>
            <person name="Sekimizu K."/>
            <person name="Hirakawa H."/>
            <person name="Kuhara S."/>
            <person name="Goto S."/>
            <person name="Yabuzaki J."/>
            <person name="Kanehisa M."/>
            <person name="Yamashita A."/>
            <person name="Oshima K."/>
            <person name="Furuya K."/>
            <person name="Yoshino C."/>
            <person name="Shiba T."/>
            <person name="Hattori M."/>
            <person name="Ogasawara N."/>
            <person name="Hayashi H."/>
            <person name="Hiramatsu K."/>
        </authorList>
    </citation>
    <scope>NUCLEOTIDE SEQUENCE [LARGE SCALE GENOMIC DNA]</scope>
    <source>
        <strain>N315</strain>
    </source>
</reference>
<reference key="2">
    <citation type="submission" date="2007-10" db="UniProtKB">
        <title>Shotgun proteomic analysis of total and membrane protein extracts of S. aureus strain N315.</title>
        <authorList>
            <person name="Vaezzadeh A.R."/>
            <person name="Deshusses J."/>
            <person name="Lescuyer P."/>
            <person name="Hochstrasser D.F."/>
        </authorList>
    </citation>
    <scope>IDENTIFICATION BY MASS SPECTROMETRY [LARGE SCALE ANALYSIS]</scope>
    <source>
        <strain>N315</strain>
    </source>
</reference>
<proteinExistence type="evidence at protein level"/>
<evidence type="ECO:0000305" key="1"/>
<accession>Q99S93</accession>
<organism>
    <name type="scientific">Staphylococcus aureus (strain N315)</name>
    <dbReference type="NCBI Taxonomy" id="158879"/>
    <lineage>
        <taxon>Bacteria</taxon>
        <taxon>Bacillati</taxon>
        <taxon>Bacillota</taxon>
        <taxon>Bacilli</taxon>
        <taxon>Bacillales</taxon>
        <taxon>Staphylococcaceae</taxon>
        <taxon>Staphylococcus</taxon>
    </lineage>
</organism>
<gene>
    <name type="ordered locus">SA1975.1</name>
    <name type="ORF">SAS074</name>
</gene>
<feature type="chain" id="PRO_0000294503" description="UPF0457 protein SA1975.1">
    <location>
        <begin position="1"/>
        <end position="86"/>
    </location>
</feature>
<protein>
    <recommendedName>
        <fullName>UPF0457 protein SA1975.1</fullName>
    </recommendedName>
</protein>
<name>Y197A_STAAN</name>
<sequence>MAMTVKKDNNEVRIQWRVADIKIPTSEIKNITQDQDIHAVPKLDSKDVSRIGSTFGKTNRVIIDTEDHEYIIYTQNDQKVYNELTK</sequence>